<reference key="1">
    <citation type="journal article" date="2005" name="Genome Biol.">
        <title>Full-length cDNAs from chicken bursal lymphocytes to facilitate gene function analysis.</title>
        <authorList>
            <person name="Caldwell R.B."/>
            <person name="Kierzek A.M."/>
            <person name="Arakawa H."/>
            <person name="Bezzubov Y."/>
            <person name="Zaim J."/>
            <person name="Fiedler P."/>
            <person name="Kutter S."/>
            <person name="Blagodatski A."/>
            <person name="Kostovska D."/>
            <person name="Koter M."/>
            <person name="Plachy J."/>
            <person name="Carninci P."/>
            <person name="Hayashizaki Y."/>
            <person name="Buerstedde J.-M."/>
        </authorList>
    </citation>
    <scope>NUCLEOTIDE SEQUENCE [LARGE SCALE MRNA]</scope>
    <source>
        <strain>CB</strain>
        <tissue>Bursa of Fabricius</tissue>
    </source>
</reference>
<accession>Q5F433</accession>
<gene>
    <name type="primary">ARL6IP5</name>
    <name type="synonym">PRAF3</name>
    <name type="ORF">RCJMB04_3k9</name>
</gene>
<proteinExistence type="evidence at transcript level"/>
<comment type="function">
    <text evidence="3 4">Regulates intracellular concentrations of taurine and glutamate. Negatively modulates SLC1A1/EAAC1 glutamate transport activity by decreasing its affinity for glutamate in a PKC activity-dependent manner. May be involved in membrane traffic.</text>
</comment>
<comment type="subunit">
    <text evidence="4">Binds to prenylated RAB and Ras superfamily members.</text>
</comment>
<comment type="subcellular location">
    <subcellularLocation>
        <location evidence="4">Endoplasmic reticulum membrane</location>
        <topology evidence="5">Multi-pass membrane protein</topology>
    </subcellularLocation>
    <subcellularLocation>
        <location evidence="4">Cell membrane</location>
        <topology evidence="5">Multi-pass membrane protein</topology>
    </subcellularLocation>
    <subcellularLocation>
        <location evidence="4">Cytoplasm</location>
    </subcellularLocation>
    <subcellularLocation>
        <location evidence="4">Cytoplasm</location>
        <location evidence="4">Cytoskeleton</location>
    </subcellularLocation>
    <text evidence="4">Also exists as a soluble form in the cytoplasm. Associated with microtubules.</text>
</comment>
<comment type="similarity">
    <text evidence="6">Belongs to the PRA1 family.</text>
</comment>
<organism>
    <name type="scientific">Gallus gallus</name>
    <name type="common">Chicken</name>
    <dbReference type="NCBI Taxonomy" id="9031"/>
    <lineage>
        <taxon>Eukaryota</taxon>
        <taxon>Metazoa</taxon>
        <taxon>Chordata</taxon>
        <taxon>Craniata</taxon>
        <taxon>Vertebrata</taxon>
        <taxon>Euteleostomi</taxon>
        <taxon>Archelosauria</taxon>
        <taxon>Archosauria</taxon>
        <taxon>Dinosauria</taxon>
        <taxon>Saurischia</taxon>
        <taxon>Theropoda</taxon>
        <taxon>Coelurosauria</taxon>
        <taxon>Aves</taxon>
        <taxon>Neognathae</taxon>
        <taxon>Galloanserae</taxon>
        <taxon>Galliformes</taxon>
        <taxon>Phasianidae</taxon>
        <taxon>Phasianinae</taxon>
        <taxon>Gallus</taxon>
    </lineage>
</organism>
<dbReference type="EMBL" id="AJ851467">
    <property type="protein sequence ID" value="CAH65101.1"/>
    <property type="molecule type" value="mRNA"/>
</dbReference>
<dbReference type="RefSeq" id="NP_001012623.1">
    <property type="nucleotide sequence ID" value="NM_001012605.2"/>
</dbReference>
<dbReference type="SMR" id="Q5F433"/>
<dbReference type="FunCoup" id="Q5F433">
    <property type="interactions" value="2303"/>
</dbReference>
<dbReference type="STRING" id="9031.ENSGALP00000052270"/>
<dbReference type="PaxDb" id="9031-ENSGALP00000028073"/>
<dbReference type="Ensembl" id="ENSGALT00010048501.1">
    <property type="protein sequence ID" value="ENSGALP00010028600.1"/>
    <property type="gene ID" value="ENSGALG00010020070.1"/>
</dbReference>
<dbReference type="GeneID" id="426074"/>
<dbReference type="KEGG" id="gga:426074"/>
<dbReference type="CTD" id="10550"/>
<dbReference type="VEuPathDB" id="HostDB:geneid_426074"/>
<dbReference type="eggNOG" id="KOG4050">
    <property type="taxonomic scope" value="Eukaryota"/>
</dbReference>
<dbReference type="GeneTree" id="ENSGT00390000008631"/>
<dbReference type="HOGENOM" id="CLU_097683_0_0_1"/>
<dbReference type="InParanoid" id="Q5F433"/>
<dbReference type="OMA" id="KPWDDFF"/>
<dbReference type="OrthoDB" id="18213at2759"/>
<dbReference type="PhylomeDB" id="Q5F433"/>
<dbReference type="TreeFam" id="TF105479"/>
<dbReference type="PRO" id="PR:Q5F433"/>
<dbReference type="Proteomes" id="UP000000539">
    <property type="component" value="Chromosome 12"/>
</dbReference>
<dbReference type="GO" id="GO:0005856">
    <property type="term" value="C:cytoskeleton"/>
    <property type="evidence" value="ECO:0007669"/>
    <property type="project" value="UniProtKB-SubCell"/>
</dbReference>
<dbReference type="GO" id="GO:0005789">
    <property type="term" value="C:endoplasmic reticulum membrane"/>
    <property type="evidence" value="ECO:0007669"/>
    <property type="project" value="UniProtKB-SubCell"/>
</dbReference>
<dbReference type="GO" id="GO:0016020">
    <property type="term" value="C:membrane"/>
    <property type="evidence" value="ECO:0000318"/>
    <property type="project" value="GO_Central"/>
</dbReference>
<dbReference type="GO" id="GO:0005886">
    <property type="term" value="C:plasma membrane"/>
    <property type="evidence" value="ECO:0007669"/>
    <property type="project" value="UniProtKB-SubCell"/>
</dbReference>
<dbReference type="GO" id="GO:0099523">
    <property type="term" value="C:presynaptic cytosol"/>
    <property type="evidence" value="ECO:0007669"/>
    <property type="project" value="Ensembl"/>
</dbReference>
<dbReference type="GO" id="GO:0034599">
    <property type="term" value="P:cellular response to oxidative stress"/>
    <property type="evidence" value="ECO:0007669"/>
    <property type="project" value="Ensembl"/>
</dbReference>
<dbReference type="GO" id="GO:0006749">
    <property type="term" value="P:glutathione metabolic process"/>
    <property type="evidence" value="ECO:0007669"/>
    <property type="project" value="Ensembl"/>
</dbReference>
<dbReference type="GO" id="GO:0008631">
    <property type="term" value="P:intrinsic apoptotic signaling pathway in response to oxidative stress"/>
    <property type="evidence" value="ECO:0007669"/>
    <property type="project" value="Ensembl"/>
</dbReference>
<dbReference type="GO" id="GO:0098712">
    <property type="term" value="P:L-glutamate import across plasma membrane"/>
    <property type="evidence" value="ECO:0007669"/>
    <property type="project" value="Ensembl"/>
</dbReference>
<dbReference type="GO" id="GO:0015813">
    <property type="term" value="P:L-glutamate transmembrane transport"/>
    <property type="evidence" value="ECO:0000250"/>
    <property type="project" value="AgBase"/>
</dbReference>
<dbReference type="GO" id="GO:0007611">
    <property type="term" value="P:learning or memory"/>
    <property type="evidence" value="ECO:0007669"/>
    <property type="project" value="Ensembl"/>
</dbReference>
<dbReference type="GO" id="GO:0002037">
    <property type="term" value="P:negative regulation of L-glutamate import across plasma membrane"/>
    <property type="evidence" value="ECO:0000250"/>
    <property type="project" value="UniProtKB"/>
</dbReference>
<dbReference type="GO" id="GO:0010917">
    <property type="term" value="P:negative regulation of mitochondrial membrane potential"/>
    <property type="evidence" value="ECO:0007669"/>
    <property type="project" value="Ensembl"/>
</dbReference>
<dbReference type="GO" id="GO:0051051">
    <property type="term" value="P:negative regulation of transport"/>
    <property type="evidence" value="ECO:0000318"/>
    <property type="project" value="GO_Central"/>
</dbReference>
<dbReference type="GO" id="GO:0043065">
    <property type="term" value="P:positive regulation of apoptotic process"/>
    <property type="evidence" value="ECO:0007669"/>
    <property type="project" value="Ensembl"/>
</dbReference>
<dbReference type="GO" id="GO:0032874">
    <property type="term" value="P:positive regulation of stress-activated MAPK cascade"/>
    <property type="evidence" value="ECO:0007669"/>
    <property type="project" value="Ensembl"/>
</dbReference>
<dbReference type="GO" id="GO:0072659">
    <property type="term" value="P:protein localization to plasma membrane"/>
    <property type="evidence" value="ECO:0007669"/>
    <property type="project" value="Ensembl"/>
</dbReference>
<dbReference type="GO" id="GO:0015031">
    <property type="term" value="P:protein transport"/>
    <property type="evidence" value="ECO:0007669"/>
    <property type="project" value="Ensembl"/>
</dbReference>
<dbReference type="InterPro" id="IPR004895">
    <property type="entry name" value="Prenylated_rab_accept_PRA1"/>
</dbReference>
<dbReference type="PANTHER" id="PTHR12859:SF2">
    <property type="entry name" value="PRA1 FAMILY PROTEIN 3"/>
    <property type="match status" value="1"/>
</dbReference>
<dbReference type="PANTHER" id="PTHR12859">
    <property type="entry name" value="PRA1 PROTEIN"/>
    <property type="match status" value="1"/>
</dbReference>
<dbReference type="Pfam" id="PF03208">
    <property type="entry name" value="PRA1"/>
    <property type="match status" value="1"/>
</dbReference>
<evidence type="ECO:0000250" key="1"/>
<evidence type="ECO:0000250" key="2">
    <source>
        <dbReference type="UniProtKB" id="O75915"/>
    </source>
</evidence>
<evidence type="ECO:0000250" key="3">
    <source>
        <dbReference type="UniProtKB" id="Q8R5J9"/>
    </source>
</evidence>
<evidence type="ECO:0000250" key="4">
    <source>
        <dbReference type="UniProtKB" id="Q9ES40"/>
    </source>
</evidence>
<evidence type="ECO:0000255" key="5"/>
<evidence type="ECO:0000305" key="6"/>
<protein>
    <recommendedName>
        <fullName>PRA1 family protein 3</fullName>
    </recommendedName>
    <alternativeName>
        <fullName>ADP-ribosylation factor-like protein 6-interacting protein 5</fullName>
        <shortName>ARL-6-interacting protein 5</shortName>
        <shortName>Aip-5</shortName>
    </alternativeName>
</protein>
<sequence length="188" mass="21652">MEVQVAPLRSWEDFFPGSDRFGRPDFKDISKWNNRVVNNLLYYQTNYLMVAAAVVAIVGFLSPLNMLIGGTVVILVFLGFVWVSHNKDILRRMKKQYPTTFVIVIMLSSYFLISYLGDVMVFMFGITLPLLLMFIHASLRLRNIKNKLENKKEEIGLKKTPMGIILDALEQQEDNINKLASYIPKVKE</sequence>
<name>PRAF3_CHICK</name>
<keyword id="KW-0007">Acetylation</keyword>
<keyword id="KW-1003">Cell membrane</keyword>
<keyword id="KW-0963">Cytoplasm</keyword>
<keyword id="KW-0206">Cytoskeleton</keyword>
<keyword id="KW-0256">Endoplasmic reticulum</keyword>
<keyword id="KW-0472">Membrane</keyword>
<keyword id="KW-1185">Reference proteome</keyword>
<keyword id="KW-0812">Transmembrane</keyword>
<keyword id="KW-1133">Transmembrane helix</keyword>
<feature type="chain" id="PRO_0000256851" description="PRA1 family protein 3">
    <location>
        <begin position="1"/>
        <end position="188"/>
    </location>
</feature>
<feature type="topological domain" description="Cytoplasmic" evidence="1">
    <location>
        <begin position="1"/>
        <end position="35"/>
    </location>
</feature>
<feature type="transmembrane region" description="Helical" evidence="5">
    <location>
        <begin position="36"/>
        <end position="56"/>
    </location>
</feature>
<feature type="transmembrane region" description="Helical" evidence="5">
    <location>
        <begin position="57"/>
        <end position="77"/>
    </location>
</feature>
<feature type="topological domain" description="Cytoplasmic" evidence="1">
    <location>
        <begin position="78"/>
        <end position="93"/>
    </location>
</feature>
<feature type="transmembrane region" description="Helical" evidence="5">
    <location>
        <begin position="94"/>
        <end position="114"/>
    </location>
</feature>
<feature type="transmembrane region" description="Helical" evidence="5">
    <location>
        <begin position="115"/>
        <end position="135"/>
    </location>
</feature>
<feature type="topological domain" description="Cytoplasmic" evidence="1">
    <location>
        <begin position="136"/>
        <end position="188"/>
    </location>
</feature>
<feature type="region of interest" description="Targeting to endoplasmic reticulum membrane" evidence="4">
    <location>
        <begin position="136"/>
        <end position="188"/>
    </location>
</feature>
<feature type="modified residue" description="N-acetylmethionine" evidence="2">
    <location>
        <position position="1"/>
    </location>
</feature>